<name>RL23_RHOE4</name>
<evidence type="ECO:0000255" key="1">
    <source>
        <dbReference type="HAMAP-Rule" id="MF_01369"/>
    </source>
</evidence>
<evidence type="ECO:0000305" key="2"/>
<protein>
    <recommendedName>
        <fullName evidence="1">Large ribosomal subunit protein uL23</fullName>
    </recommendedName>
    <alternativeName>
        <fullName evidence="2">50S ribosomal protein L23</fullName>
    </alternativeName>
</protein>
<comment type="function">
    <text evidence="1">One of the early assembly proteins it binds 23S rRNA. One of the proteins that surrounds the polypeptide exit tunnel on the outside of the ribosome. Forms the main docking site for trigger factor binding to the ribosome.</text>
</comment>
<comment type="subunit">
    <text evidence="1">Part of the 50S ribosomal subunit. Contacts protein L29, and trigger factor when it is bound to the ribosome.</text>
</comment>
<comment type="similarity">
    <text evidence="1">Belongs to the universal ribosomal protein uL23 family.</text>
</comment>
<keyword id="KW-0687">Ribonucleoprotein</keyword>
<keyword id="KW-0689">Ribosomal protein</keyword>
<keyword id="KW-0694">RNA-binding</keyword>
<keyword id="KW-0699">rRNA-binding</keyword>
<gene>
    <name evidence="1" type="primary">rplW</name>
    <name type="ordered locus">RER_18540</name>
</gene>
<organism>
    <name type="scientific">Rhodococcus erythropolis (strain PR4 / NBRC 100887)</name>
    <dbReference type="NCBI Taxonomy" id="234621"/>
    <lineage>
        <taxon>Bacteria</taxon>
        <taxon>Bacillati</taxon>
        <taxon>Actinomycetota</taxon>
        <taxon>Actinomycetes</taxon>
        <taxon>Mycobacteriales</taxon>
        <taxon>Nocardiaceae</taxon>
        <taxon>Rhodococcus</taxon>
        <taxon>Rhodococcus erythropolis group</taxon>
    </lineage>
</organism>
<proteinExistence type="inferred from homology"/>
<dbReference type="EMBL" id="AP008957">
    <property type="protein sequence ID" value="BAH32562.1"/>
    <property type="molecule type" value="Genomic_DNA"/>
</dbReference>
<dbReference type="RefSeq" id="WP_003940990.1">
    <property type="nucleotide sequence ID" value="NC_012490.1"/>
</dbReference>
<dbReference type="SMR" id="C0ZW27"/>
<dbReference type="GeneID" id="93803302"/>
<dbReference type="KEGG" id="rer:RER_18540"/>
<dbReference type="eggNOG" id="COG0089">
    <property type="taxonomic scope" value="Bacteria"/>
</dbReference>
<dbReference type="HOGENOM" id="CLU_037562_3_2_11"/>
<dbReference type="Proteomes" id="UP000002204">
    <property type="component" value="Chromosome"/>
</dbReference>
<dbReference type="GO" id="GO:1990904">
    <property type="term" value="C:ribonucleoprotein complex"/>
    <property type="evidence" value="ECO:0007669"/>
    <property type="project" value="UniProtKB-KW"/>
</dbReference>
<dbReference type="GO" id="GO:0005840">
    <property type="term" value="C:ribosome"/>
    <property type="evidence" value="ECO:0007669"/>
    <property type="project" value="UniProtKB-KW"/>
</dbReference>
<dbReference type="GO" id="GO:0019843">
    <property type="term" value="F:rRNA binding"/>
    <property type="evidence" value="ECO:0007669"/>
    <property type="project" value="UniProtKB-UniRule"/>
</dbReference>
<dbReference type="GO" id="GO:0003735">
    <property type="term" value="F:structural constituent of ribosome"/>
    <property type="evidence" value="ECO:0007669"/>
    <property type="project" value="InterPro"/>
</dbReference>
<dbReference type="GO" id="GO:0006412">
    <property type="term" value="P:translation"/>
    <property type="evidence" value="ECO:0007669"/>
    <property type="project" value="UniProtKB-UniRule"/>
</dbReference>
<dbReference type="FunFam" id="3.30.70.330:FF:000001">
    <property type="entry name" value="50S ribosomal protein L23"/>
    <property type="match status" value="1"/>
</dbReference>
<dbReference type="Gene3D" id="3.30.70.330">
    <property type="match status" value="1"/>
</dbReference>
<dbReference type="HAMAP" id="MF_01369_B">
    <property type="entry name" value="Ribosomal_uL23_B"/>
    <property type="match status" value="1"/>
</dbReference>
<dbReference type="InterPro" id="IPR012677">
    <property type="entry name" value="Nucleotide-bd_a/b_plait_sf"/>
</dbReference>
<dbReference type="InterPro" id="IPR013025">
    <property type="entry name" value="Ribosomal_uL23-like"/>
</dbReference>
<dbReference type="InterPro" id="IPR012678">
    <property type="entry name" value="Ribosomal_uL23/eL15/eS24_sf"/>
</dbReference>
<dbReference type="NCBIfam" id="NF004363">
    <property type="entry name" value="PRK05738.2-4"/>
    <property type="match status" value="1"/>
</dbReference>
<dbReference type="NCBIfam" id="NF004364">
    <property type="entry name" value="PRK05738.2-5"/>
    <property type="match status" value="1"/>
</dbReference>
<dbReference type="PANTHER" id="PTHR11620">
    <property type="entry name" value="60S RIBOSOMAL PROTEIN L23A"/>
    <property type="match status" value="1"/>
</dbReference>
<dbReference type="Pfam" id="PF00276">
    <property type="entry name" value="Ribosomal_L23"/>
    <property type="match status" value="1"/>
</dbReference>
<dbReference type="SUPFAM" id="SSF54189">
    <property type="entry name" value="Ribosomal proteins S24e, L23 and L15e"/>
    <property type="match status" value="1"/>
</dbReference>
<reference key="1">
    <citation type="submission" date="2005-03" db="EMBL/GenBank/DDBJ databases">
        <title>Comparison of the complete genome sequences of Rhodococcus erythropolis PR4 and Rhodococcus opacus B4.</title>
        <authorList>
            <person name="Takarada H."/>
            <person name="Sekine M."/>
            <person name="Hosoyama A."/>
            <person name="Yamada R."/>
            <person name="Fujisawa T."/>
            <person name="Omata S."/>
            <person name="Shimizu A."/>
            <person name="Tsukatani N."/>
            <person name="Tanikawa S."/>
            <person name="Fujita N."/>
            <person name="Harayama S."/>
        </authorList>
    </citation>
    <scope>NUCLEOTIDE SEQUENCE [LARGE SCALE GENOMIC DNA]</scope>
    <source>
        <strain>PR4 / NBRC 100887</strain>
    </source>
</reference>
<accession>C0ZW27</accession>
<sequence length="101" mass="11123">MSTIADPRDILLAPVISEKSYGLIEEGTYTFLVHPDSNKTQIKIAVEKVFGVKVTSVNTANRQGKRKRTRFGYGKRKDTKRALVTLSADSKPIEIFGGPVA</sequence>
<feature type="chain" id="PRO_1000215042" description="Large ribosomal subunit protein uL23">
    <location>
        <begin position="1"/>
        <end position="101"/>
    </location>
</feature>